<gene>
    <name evidence="1" type="primary">fbp</name>
    <name type="ordered locus">NP_1592A</name>
</gene>
<comment type="catalytic activity">
    <reaction evidence="1">
        <text>beta-D-fructose 1,6-bisphosphate + H2O = beta-D-fructose 6-phosphate + phosphate</text>
        <dbReference type="Rhea" id="RHEA:11064"/>
        <dbReference type="ChEBI" id="CHEBI:15377"/>
        <dbReference type="ChEBI" id="CHEBI:32966"/>
        <dbReference type="ChEBI" id="CHEBI:43474"/>
        <dbReference type="ChEBI" id="CHEBI:57634"/>
        <dbReference type="EC" id="3.1.3.11"/>
    </reaction>
</comment>
<comment type="cofactor">
    <cofactor evidence="1">
        <name>Mg(2+)</name>
        <dbReference type="ChEBI" id="CHEBI:18420"/>
    </cofactor>
    <text evidence="1">Binds 2 magnesium ions per subunit.</text>
</comment>
<comment type="pathway">
    <text evidence="1">Carbohydrate biosynthesis; gluconeogenesis.</text>
</comment>
<comment type="subunit">
    <text evidence="1">Homotetramer.</text>
</comment>
<comment type="subcellular location">
    <subcellularLocation>
        <location evidence="1">Cytoplasm</location>
    </subcellularLocation>
</comment>
<comment type="similarity">
    <text evidence="1">Belongs to the FBPase class 1 family.</text>
</comment>
<accession>Q3ISJ9</accession>
<sequence length="283" mass="30157">MADAIDDIVDVVVSTAPDVRDGLTGRRVYEADENPSGERQLEADVYADELLEARLLDVDAVGSYASEERESVIEADEGGRYHVAADPLDGSSNLKSNNTMGTLFGVYEEPLPAAGDALVAAGYVLYGPITTLITARDGTVTESVIDEDGTRTVVTDDLTLPSDPVVYGFGGRVPNWTPAFADYVESVASELKLRYGGAMIGDVNQVLTYGGVFGYPGLEDRPEGKLRLLFEGHPIAAIVEAAGGASSDGDGSLLKKEPEQLHERTPLFVGNDEYIERLEAALP</sequence>
<proteinExistence type="inferred from homology"/>
<keyword id="KW-0119">Carbohydrate metabolism</keyword>
<keyword id="KW-0963">Cytoplasm</keyword>
<keyword id="KW-0378">Hydrolase</keyword>
<keyword id="KW-0460">Magnesium</keyword>
<keyword id="KW-0479">Metal-binding</keyword>
<keyword id="KW-1185">Reference proteome</keyword>
<protein>
    <recommendedName>
        <fullName evidence="1">Fructose-1,6-bisphosphatase class 1</fullName>
        <shortName evidence="1">FBPase class 1</shortName>
        <ecNumber evidence="1">3.1.3.11</ecNumber>
    </recommendedName>
    <alternativeName>
        <fullName evidence="1">D-fructose-1,6-bisphosphate 1-phosphohydrolase class 1</fullName>
    </alternativeName>
</protein>
<evidence type="ECO:0000255" key="1">
    <source>
        <dbReference type="HAMAP-Rule" id="MF_01855"/>
    </source>
</evidence>
<feature type="chain" id="PRO_0000364776" description="Fructose-1,6-bisphosphatase class 1">
    <location>
        <begin position="1"/>
        <end position="283"/>
    </location>
</feature>
<feature type="binding site" evidence="1">
    <location>
        <position position="67"/>
    </location>
    <ligand>
        <name>Mg(2+)</name>
        <dbReference type="ChEBI" id="CHEBI:18420"/>
        <label>1</label>
    </ligand>
</feature>
<feature type="binding site" evidence="1">
    <location>
        <position position="86"/>
    </location>
    <ligand>
        <name>Mg(2+)</name>
        <dbReference type="ChEBI" id="CHEBI:18420"/>
        <label>1</label>
    </ligand>
</feature>
<feature type="binding site" evidence="1">
    <location>
        <position position="86"/>
    </location>
    <ligand>
        <name>Mg(2+)</name>
        <dbReference type="ChEBI" id="CHEBI:18420"/>
        <label>2</label>
    </ligand>
</feature>
<feature type="binding site" evidence="1">
    <location>
        <position position="88"/>
    </location>
    <ligand>
        <name>Mg(2+)</name>
        <dbReference type="ChEBI" id="CHEBI:18420"/>
        <label>1</label>
    </ligand>
</feature>
<feature type="binding site" evidence="1">
    <location>
        <begin position="89"/>
        <end position="92"/>
    </location>
    <ligand>
        <name>substrate</name>
    </ligand>
</feature>
<feature type="binding site" evidence="1">
    <location>
        <position position="89"/>
    </location>
    <ligand>
        <name>Mg(2+)</name>
        <dbReference type="ChEBI" id="CHEBI:18420"/>
        <label>2</label>
    </ligand>
</feature>
<feature type="binding site" evidence="1">
    <location>
        <position position="195"/>
    </location>
    <ligand>
        <name>substrate</name>
    </ligand>
</feature>
<feature type="binding site" evidence="1">
    <location>
        <position position="225"/>
    </location>
    <ligand>
        <name>substrate</name>
    </ligand>
</feature>
<feature type="binding site" evidence="1">
    <location>
        <position position="231"/>
    </location>
    <ligand>
        <name>Mg(2+)</name>
        <dbReference type="ChEBI" id="CHEBI:18420"/>
        <label>2</label>
    </ligand>
</feature>
<organism>
    <name type="scientific">Natronomonas pharaonis (strain ATCC 35678 / DSM 2160 / CIP 103997 / JCM 8858 / NBRC 14720 / NCIMB 2260 / Gabara)</name>
    <name type="common">Halobacterium pharaonis</name>
    <dbReference type="NCBI Taxonomy" id="348780"/>
    <lineage>
        <taxon>Archaea</taxon>
        <taxon>Methanobacteriati</taxon>
        <taxon>Methanobacteriota</taxon>
        <taxon>Stenosarchaea group</taxon>
        <taxon>Halobacteria</taxon>
        <taxon>Halobacteriales</taxon>
        <taxon>Haloarculaceae</taxon>
        <taxon>Natronomonas</taxon>
    </lineage>
</organism>
<dbReference type="EC" id="3.1.3.11" evidence="1"/>
<dbReference type="EMBL" id="CR936257">
    <property type="protein sequence ID" value="CAI48887.1"/>
    <property type="molecule type" value="Genomic_DNA"/>
</dbReference>
<dbReference type="RefSeq" id="WP_011322521.1">
    <property type="nucleotide sequence ID" value="NC_007426.1"/>
</dbReference>
<dbReference type="SMR" id="Q3ISJ9"/>
<dbReference type="STRING" id="348780.NP_1592A"/>
<dbReference type="EnsemblBacteria" id="CAI48887">
    <property type="protein sequence ID" value="CAI48887"/>
    <property type="gene ID" value="NP_1592A"/>
</dbReference>
<dbReference type="GeneID" id="3702693"/>
<dbReference type="KEGG" id="nph:NP_1592A"/>
<dbReference type="eggNOG" id="arCOG04603">
    <property type="taxonomic scope" value="Archaea"/>
</dbReference>
<dbReference type="HOGENOM" id="CLU_039977_3_0_2"/>
<dbReference type="OrthoDB" id="146513at2157"/>
<dbReference type="UniPathway" id="UPA00138"/>
<dbReference type="Proteomes" id="UP000002698">
    <property type="component" value="Chromosome"/>
</dbReference>
<dbReference type="GO" id="GO:0005737">
    <property type="term" value="C:cytoplasm"/>
    <property type="evidence" value="ECO:0007669"/>
    <property type="project" value="UniProtKB-SubCell"/>
</dbReference>
<dbReference type="GO" id="GO:0042132">
    <property type="term" value="F:fructose 1,6-bisphosphate 1-phosphatase activity"/>
    <property type="evidence" value="ECO:0007669"/>
    <property type="project" value="UniProtKB-UniRule"/>
</dbReference>
<dbReference type="GO" id="GO:0000287">
    <property type="term" value="F:magnesium ion binding"/>
    <property type="evidence" value="ECO:0007669"/>
    <property type="project" value="UniProtKB-UniRule"/>
</dbReference>
<dbReference type="GO" id="GO:0030388">
    <property type="term" value="P:fructose 1,6-bisphosphate metabolic process"/>
    <property type="evidence" value="ECO:0007669"/>
    <property type="project" value="TreeGrafter"/>
</dbReference>
<dbReference type="GO" id="GO:0006002">
    <property type="term" value="P:fructose 6-phosphate metabolic process"/>
    <property type="evidence" value="ECO:0007669"/>
    <property type="project" value="TreeGrafter"/>
</dbReference>
<dbReference type="GO" id="GO:0006000">
    <property type="term" value="P:fructose metabolic process"/>
    <property type="evidence" value="ECO:0007669"/>
    <property type="project" value="TreeGrafter"/>
</dbReference>
<dbReference type="GO" id="GO:0006094">
    <property type="term" value="P:gluconeogenesis"/>
    <property type="evidence" value="ECO:0007669"/>
    <property type="project" value="UniProtKB-UniRule"/>
</dbReference>
<dbReference type="GO" id="GO:0005986">
    <property type="term" value="P:sucrose biosynthetic process"/>
    <property type="evidence" value="ECO:0007669"/>
    <property type="project" value="TreeGrafter"/>
</dbReference>
<dbReference type="Gene3D" id="3.40.190.80">
    <property type="match status" value="1"/>
</dbReference>
<dbReference type="Gene3D" id="3.30.540.10">
    <property type="entry name" value="Fructose-1,6-Bisphosphatase, subunit A, domain 1"/>
    <property type="match status" value="1"/>
</dbReference>
<dbReference type="HAMAP" id="MF_01855">
    <property type="entry name" value="FBPase_class1"/>
    <property type="match status" value="1"/>
</dbReference>
<dbReference type="InterPro" id="IPR044015">
    <property type="entry name" value="FBPase_C_dom"/>
</dbReference>
<dbReference type="InterPro" id="IPR000146">
    <property type="entry name" value="FBPase_class-1"/>
</dbReference>
<dbReference type="InterPro" id="IPR033391">
    <property type="entry name" value="FBPase_N"/>
</dbReference>
<dbReference type="InterPro" id="IPR028343">
    <property type="entry name" value="FBPtase"/>
</dbReference>
<dbReference type="InterPro" id="IPR020548">
    <property type="entry name" value="Fructose_bisphosphatase_AS"/>
</dbReference>
<dbReference type="NCBIfam" id="NF006785">
    <property type="entry name" value="PRK09293.3-2"/>
    <property type="match status" value="1"/>
</dbReference>
<dbReference type="NCBIfam" id="NF006786">
    <property type="entry name" value="PRK09293.3-3"/>
    <property type="match status" value="1"/>
</dbReference>
<dbReference type="PANTHER" id="PTHR11556">
    <property type="entry name" value="FRUCTOSE-1,6-BISPHOSPHATASE-RELATED"/>
    <property type="match status" value="1"/>
</dbReference>
<dbReference type="PANTHER" id="PTHR11556:SF35">
    <property type="entry name" value="SEDOHEPTULOSE-1,7-BISPHOSPHATASE, CHLOROPLASTIC"/>
    <property type="match status" value="1"/>
</dbReference>
<dbReference type="Pfam" id="PF00316">
    <property type="entry name" value="FBPase"/>
    <property type="match status" value="1"/>
</dbReference>
<dbReference type="Pfam" id="PF18913">
    <property type="entry name" value="FBPase_C"/>
    <property type="match status" value="1"/>
</dbReference>
<dbReference type="PIRSF" id="PIRSF500210">
    <property type="entry name" value="FBPtase"/>
    <property type="match status" value="1"/>
</dbReference>
<dbReference type="PIRSF" id="PIRSF000904">
    <property type="entry name" value="FBPtase_SBPase"/>
    <property type="match status" value="1"/>
</dbReference>
<dbReference type="PRINTS" id="PR00115">
    <property type="entry name" value="F16BPHPHTASE"/>
</dbReference>
<dbReference type="SUPFAM" id="SSF56655">
    <property type="entry name" value="Carbohydrate phosphatase"/>
    <property type="match status" value="1"/>
</dbReference>
<dbReference type="PROSITE" id="PS00124">
    <property type="entry name" value="FBPASE"/>
    <property type="match status" value="1"/>
</dbReference>
<reference key="1">
    <citation type="journal article" date="2005" name="Genome Res.">
        <title>Living with two extremes: conclusions from the genome sequence of Natronomonas pharaonis.</title>
        <authorList>
            <person name="Falb M."/>
            <person name="Pfeiffer F."/>
            <person name="Palm P."/>
            <person name="Rodewald K."/>
            <person name="Hickmann V."/>
            <person name="Tittor J."/>
            <person name="Oesterhelt D."/>
        </authorList>
    </citation>
    <scope>NUCLEOTIDE SEQUENCE [LARGE SCALE GENOMIC DNA]</scope>
    <source>
        <strain>ATCC 35678 / DSM 2160 / CIP 103997 / JCM 8858 / NBRC 14720 / NCIMB 2260 / Gabara</strain>
    </source>
</reference>
<name>F16PA_NATPD</name>